<proteinExistence type="inferred from homology"/>
<keyword id="KW-0067">ATP-binding</keyword>
<keyword id="KW-0347">Helicase</keyword>
<keyword id="KW-0378">Hydrolase</keyword>
<keyword id="KW-0547">Nucleotide-binding</keyword>
<keyword id="KW-1185">Reference proteome</keyword>
<organism>
    <name type="scientific">Mycoplasma pneumoniae (strain ATCC 29342 / M129 / Subtype 1)</name>
    <name type="common">Mycoplasmoides pneumoniae</name>
    <dbReference type="NCBI Taxonomy" id="272634"/>
    <lineage>
        <taxon>Bacteria</taxon>
        <taxon>Bacillati</taxon>
        <taxon>Mycoplasmatota</taxon>
        <taxon>Mycoplasmoidales</taxon>
        <taxon>Mycoplasmoidaceae</taxon>
        <taxon>Mycoplasmoides</taxon>
    </lineage>
</organism>
<evidence type="ECO:0000255" key="1"/>
<evidence type="ECO:0000305" key="2"/>
<comment type="similarity">
    <text evidence="2">Belongs to the DNA2/NAM7 helicase family.</text>
</comment>
<gene>
    <name type="ordered locus">MPN_153</name>
    <name type="ORF">E07_orf1113</name>
    <name type="ORF">MP001</name>
</gene>
<dbReference type="EC" id="3.6.4.-"/>
<dbReference type="EMBL" id="U00089">
    <property type="protein sequence ID" value="AAB95649.1"/>
    <property type="molecule type" value="Genomic_DNA"/>
</dbReference>
<dbReference type="PIR" id="S73327">
    <property type="entry name" value="S73327"/>
</dbReference>
<dbReference type="RefSeq" id="NP_109841.1">
    <property type="nucleotide sequence ID" value="NC_000912.1"/>
</dbReference>
<dbReference type="RefSeq" id="WP_010874510.1">
    <property type="nucleotide sequence ID" value="NZ_OU342337.1"/>
</dbReference>
<dbReference type="IntAct" id="P75033">
    <property type="interactions" value="3"/>
</dbReference>
<dbReference type="STRING" id="272634.MPN_153"/>
<dbReference type="EnsemblBacteria" id="AAB95649">
    <property type="protein sequence ID" value="AAB95649"/>
    <property type="gene ID" value="MPN_153"/>
</dbReference>
<dbReference type="KEGG" id="mpn:MPN_153"/>
<dbReference type="PATRIC" id="fig|272634.6.peg.170"/>
<dbReference type="HOGENOM" id="CLU_000788_4_0_14"/>
<dbReference type="OrthoDB" id="9757917at2"/>
<dbReference type="BioCyc" id="MPNE272634:G1GJ3-257-MONOMER"/>
<dbReference type="Proteomes" id="UP000000808">
    <property type="component" value="Chromosome"/>
</dbReference>
<dbReference type="GO" id="GO:0005524">
    <property type="term" value="F:ATP binding"/>
    <property type="evidence" value="ECO:0007669"/>
    <property type="project" value="UniProtKB-KW"/>
</dbReference>
<dbReference type="GO" id="GO:0004386">
    <property type="term" value="F:helicase activity"/>
    <property type="evidence" value="ECO:0007669"/>
    <property type="project" value="UniProtKB-KW"/>
</dbReference>
<dbReference type="GO" id="GO:0016787">
    <property type="term" value="F:hydrolase activity"/>
    <property type="evidence" value="ECO:0007669"/>
    <property type="project" value="UniProtKB-KW"/>
</dbReference>
<dbReference type="CDD" id="cd18808">
    <property type="entry name" value="SF1_C_Upf1"/>
    <property type="match status" value="1"/>
</dbReference>
<dbReference type="FunFam" id="3.40.50.300:FF:006147">
    <property type="entry name" value="Uncharacterized ATP-dependent helicase MG140"/>
    <property type="match status" value="1"/>
</dbReference>
<dbReference type="Gene3D" id="3.40.50.300">
    <property type="entry name" value="P-loop containing nucleotide triphosphate hydrolases"/>
    <property type="match status" value="3"/>
</dbReference>
<dbReference type="InterPro" id="IPR045055">
    <property type="entry name" value="DNA2/NAM7-like"/>
</dbReference>
<dbReference type="InterPro" id="IPR041679">
    <property type="entry name" value="DNA2/NAM7-like_C"/>
</dbReference>
<dbReference type="InterPro" id="IPR041677">
    <property type="entry name" value="DNA2/NAM7_AAA_11"/>
</dbReference>
<dbReference type="InterPro" id="IPR025103">
    <property type="entry name" value="DUF4011"/>
</dbReference>
<dbReference type="InterPro" id="IPR027417">
    <property type="entry name" value="P-loop_NTPase"/>
</dbReference>
<dbReference type="InterPro" id="IPR047187">
    <property type="entry name" value="SF1_C_Upf1"/>
</dbReference>
<dbReference type="PANTHER" id="PTHR10887">
    <property type="entry name" value="DNA2/NAM7 HELICASE FAMILY"/>
    <property type="match status" value="1"/>
</dbReference>
<dbReference type="PANTHER" id="PTHR10887:SF530">
    <property type="entry name" value="SUPERFAMILY I DNA HELICASES"/>
    <property type="match status" value="1"/>
</dbReference>
<dbReference type="Pfam" id="PF13086">
    <property type="entry name" value="AAA_11"/>
    <property type="match status" value="2"/>
</dbReference>
<dbReference type="Pfam" id="PF13087">
    <property type="entry name" value="AAA_12"/>
    <property type="match status" value="1"/>
</dbReference>
<dbReference type="Pfam" id="PF13195">
    <property type="entry name" value="DUF4011"/>
    <property type="match status" value="1"/>
</dbReference>
<dbReference type="SUPFAM" id="SSF52540">
    <property type="entry name" value="P-loop containing nucleoside triphosphate hydrolases"/>
    <property type="match status" value="1"/>
</dbReference>
<reference key="1">
    <citation type="journal article" date="1996" name="Nucleic Acids Res.">
        <title>Complete sequence analysis of the genome of the bacterium Mycoplasma pneumoniae.</title>
        <authorList>
            <person name="Himmelreich R."/>
            <person name="Hilbert H."/>
            <person name="Plagens H."/>
            <person name="Pirkl E."/>
            <person name="Li B.-C."/>
            <person name="Herrmann R."/>
        </authorList>
    </citation>
    <scope>NUCLEOTIDE SEQUENCE [LARGE SCALE GENOMIC DNA]</scope>
    <source>
        <strain>ATCC 29342 / M129 / Subtype 1</strain>
    </source>
</reference>
<sequence length="1113" mass="130334">MNDWQWLKNRLVNAKTKAVSFWLAQTTSTILDIAELIKCCSDLKNTSINGLVDLINQQEKLEFNLTRLKEIDGEDARQLFGIEGNVYKHFQTELSRFYKQTRKHFRETGSESLFLGLPVIEGINEFNDVFRAPLLYVGVKLKVAPRLERFWLEINREEIFLNPTIIGVEINKRNSLFKNNYDTTKVDINQALEIFRELEYQFRMPLTSELKSFSKKAKSDFNTEKRTNFLTNNVLLGIFDVKGDQLFQNFNEILNTDPDVLDELLKDRRDLLYDNREFRENFNLKGTYLFSHLDIFQQYAVKQAFDGDVIIEGPPGTGKSETIVNILVNLALNKKKVLFVSEKVTALDVVYNRLGSFKHIALFNASVASEKKRFYSQFADYESFFTDNFSKKDLVNEMPVFDGQWVDKILSEFTNLQNIYDTQINSGNQSYSFKEILSSFPILDVSYIKIKEHDRFDEWVRVFSSQVWLEKHLTYLAFKAELSKRWQNIDNFYALKDLLEKRKNIRVLCYVLDYFEQNNSIIKPKRVLLYTPTERGQKQLHQLQQDVAKYNSLQRFKSAAKFETIKLNLANKLAQNAKPFFFSWFIQTHAQTLLENLVQTQKQLVKAKQSYLSKIEQYVVSCKRILKATILANFFELYQTNKNELLDICREAKNPVLKEITWWFKKNFALLSKLFPVHIMTFESAALLTPNQRRLYDYVVIDEASQVYLERAIPILYRGAKYIIAGDTKQLKPSNFFQARAEYDVDEEFEDGNVEAAVHSTSLLHFLKNRSRILTLLKFHYRSDSANLIAFTNNRIYNNELIFMNKATADKQVFIVHDVIDGIWRNNRNLQEARDVVQRLEQLTQTAEYQKSLGVICFNKNQAELIEYMIDKQNNPLLNEWRDRVNAQGEYVGLFVKNIENVQGDERDIIIFSLGYDRSVNSYGPISKQGGENRLNVAITRAKQRIELFKTNRASDYNGLSSNSLGSKLLVEYLLYCEAMANNQGESLDFQATQKQAPKAKYELELENQFFNELELIFGEQFTIKRNVNEGAYSFSFVFYFNENPYLAVDFNPALPHSRKEVSENIIYREQFLKKRKWNLVNIWLDEWKLNPGGVLQKLRNCLTHSENEFEEI</sequence>
<accession>P75033</accession>
<protein>
    <recommendedName>
        <fullName>Uncharacterized ATP-dependent helicase MG140 homolog</fullName>
        <ecNumber>3.6.4.-</ecNumber>
    </recommendedName>
</protein>
<name>Y153_MYCPN</name>
<feature type="chain" id="PRO_0000080729" description="Uncharacterized ATP-dependent helicase MG140 homolog">
    <location>
        <begin position="1"/>
        <end position="1113"/>
    </location>
</feature>
<feature type="binding site" evidence="1">
    <location>
        <begin position="313"/>
        <end position="320"/>
    </location>
    <ligand>
        <name>ATP</name>
        <dbReference type="ChEBI" id="CHEBI:30616"/>
    </ligand>
</feature>